<dbReference type="EMBL" id="AE017224">
    <property type="protein sequence ID" value="AAX75511.1"/>
    <property type="molecule type" value="Genomic_DNA"/>
</dbReference>
<dbReference type="RefSeq" id="WP_002966519.1">
    <property type="nucleotide sequence ID" value="NC_006933.1"/>
</dbReference>
<dbReference type="SMR" id="P0C531"/>
<dbReference type="EnsemblBacteria" id="AAX75511">
    <property type="protein sequence ID" value="AAX75511"/>
    <property type="gene ID" value="BruAb2_0060"/>
</dbReference>
<dbReference type="GeneID" id="93015963"/>
<dbReference type="KEGG" id="bmb:BruAb2_0060"/>
<dbReference type="HOGENOM" id="CLU_041899_6_0_5"/>
<dbReference type="PRO" id="PR:P0C531"/>
<dbReference type="Proteomes" id="UP000000540">
    <property type="component" value="Chromosome II"/>
</dbReference>
<dbReference type="GO" id="GO:0005886">
    <property type="term" value="C:plasma membrane"/>
    <property type="evidence" value="ECO:0007669"/>
    <property type="project" value="UniProtKB-SubCell"/>
</dbReference>
<dbReference type="CDD" id="cd16429">
    <property type="entry name" value="VirB10"/>
    <property type="match status" value="1"/>
</dbReference>
<dbReference type="Gene3D" id="2.40.128.260">
    <property type="entry name" value="Type IV secretion system, VirB10/TraB/TrbI"/>
    <property type="match status" value="2"/>
</dbReference>
<dbReference type="InterPro" id="IPR047695">
    <property type="entry name" value="T4SS_VirB10/PtlG"/>
</dbReference>
<dbReference type="InterPro" id="IPR005498">
    <property type="entry name" value="T4SS_VirB10/TraB/TrbI"/>
</dbReference>
<dbReference type="InterPro" id="IPR042217">
    <property type="entry name" value="T4SS_VirB10/TrbI"/>
</dbReference>
<dbReference type="NCBIfam" id="NF038091">
    <property type="entry name" value="T4SS_VirB10"/>
    <property type="match status" value="1"/>
</dbReference>
<dbReference type="Pfam" id="PF03743">
    <property type="entry name" value="TrbI"/>
    <property type="match status" value="1"/>
</dbReference>
<feature type="chain" id="PRO_0000291385" description="Type IV secretion system protein virB10">
    <location>
        <begin position="1"/>
        <end position="388"/>
    </location>
</feature>
<feature type="transmembrane region" description="Helical" evidence="1">
    <location>
        <begin position="33"/>
        <end position="53"/>
    </location>
</feature>
<feature type="region of interest" description="Disordered" evidence="2">
    <location>
        <begin position="1"/>
        <end position="26"/>
    </location>
</feature>
<feature type="region of interest" description="Disordered" evidence="2">
    <location>
        <begin position="79"/>
        <end position="102"/>
    </location>
</feature>
<feature type="compositionally biased region" description="Pro residues" evidence="2">
    <location>
        <begin position="81"/>
        <end position="100"/>
    </location>
</feature>
<name>VIRBA_BRUAB</name>
<comment type="subcellular location">
    <subcellularLocation>
        <location evidence="3">Cell membrane</location>
        <topology evidence="3">Single-pass membrane protein</topology>
    </subcellularLocation>
</comment>
<comment type="similarity">
    <text evidence="3">Belongs to the TrbI/VirB10 family.</text>
</comment>
<protein>
    <recommendedName>
        <fullName>Type IV secretion system protein virB10</fullName>
    </recommendedName>
</protein>
<organism>
    <name type="scientific">Brucella abortus biovar 1 (strain 9-941)</name>
    <dbReference type="NCBI Taxonomy" id="262698"/>
    <lineage>
        <taxon>Bacteria</taxon>
        <taxon>Pseudomonadati</taxon>
        <taxon>Pseudomonadota</taxon>
        <taxon>Alphaproteobacteria</taxon>
        <taxon>Hyphomicrobiales</taxon>
        <taxon>Brucellaceae</taxon>
        <taxon>Brucella/Ochrobactrum group</taxon>
        <taxon>Brucella</taxon>
    </lineage>
</organism>
<gene>
    <name type="primary">virB10</name>
    <name type="ordered locus">BruAb2_0060</name>
</gene>
<proteinExistence type="inferred from homology"/>
<keyword id="KW-1003">Cell membrane</keyword>
<keyword id="KW-0472">Membrane</keyword>
<keyword id="KW-0812">Transmembrane</keyword>
<keyword id="KW-1133">Transmembrane helix</keyword>
<keyword id="KW-0843">Virulence</keyword>
<sequence>MTQENIPVQPGTLDGERGLPTVNENGSGRTRKVLLFLFVVGFIVVLLLLLVFHMRGNAENNHHSDKTMVQTSTVPMRTFKLPPPPPPAPPEPPAPPPAPAMPIAEPAAAALSLPPLPDDTPAKDDVLDKSASALMVVTKSSGDTNAQTAGDTVVQTTNARIQALLDSQKNTKQDAGSLGTLLHGTQTDARMASLLRNRDFLLAKGSIINCALQTRLDSTVPGMAACVVTRNMYSDNGKVLLIERGSTISGEYDANVKQGMARIYVLWTRVKTPNGVVIDLDSPGADPLGGAGLPGYIDSHFWKRFGGALMLSTIETLGRYATQKVGGGGSNQINLNTGGGESTSNLASTALKDTINIPPTLYKNQGEEIGIYIARDLDFSSVYDVKPK</sequence>
<reference key="1">
    <citation type="journal article" date="2005" name="J. Bacteriol.">
        <title>Completion of the genome sequence of Brucella abortus and comparison to the highly similar genomes of Brucella melitensis and Brucella suis.</title>
        <authorList>
            <person name="Halling S.M."/>
            <person name="Peterson-Burch B.D."/>
            <person name="Bricker B.J."/>
            <person name="Zuerner R.L."/>
            <person name="Qing Z."/>
            <person name="Li L.-L."/>
            <person name="Kapur V."/>
            <person name="Alt D.P."/>
            <person name="Olsen S.C."/>
        </authorList>
    </citation>
    <scope>NUCLEOTIDE SEQUENCE [LARGE SCALE GENOMIC DNA]</scope>
    <source>
        <strain>9-941</strain>
    </source>
</reference>
<evidence type="ECO:0000255" key="1"/>
<evidence type="ECO:0000256" key="2">
    <source>
        <dbReference type="SAM" id="MobiDB-lite"/>
    </source>
</evidence>
<evidence type="ECO:0000305" key="3"/>
<accession>P0C531</accession>
<accession>Q57A23</accession>
<accession>Q9KIS6</accession>